<comment type="function">
    <text evidence="1">Zinc phosphodiesterase, which displays some tRNA 3'-processing endonuclease activity. Probably involved in tRNA maturation, by removing a 3'-trailer from precursor tRNA.</text>
</comment>
<comment type="catalytic activity">
    <reaction evidence="1">
        <text>Endonucleolytic cleavage of RNA, removing extra 3' nucleotides from tRNA precursor, generating 3' termini of tRNAs. A 3'-hydroxy group is left at the tRNA terminus and a 5'-phosphoryl group is left at the trailer molecule.</text>
        <dbReference type="EC" id="3.1.26.11"/>
    </reaction>
</comment>
<comment type="cofactor">
    <cofactor evidence="1">
        <name>Zn(2+)</name>
        <dbReference type="ChEBI" id="CHEBI:29105"/>
    </cofactor>
    <text evidence="1">Binds 2 Zn(2+) ions.</text>
</comment>
<comment type="subunit">
    <text evidence="1">Homodimer.</text>
</comment>
<comment type="similarity">
    <text evidence="1">Belongs to the RNase Z family.</text>
</comment>
<name>RNZ_LIMRD</name>
<evidence type="ECO:0000255" key="1">
    <source>
        <dbReference type="HAMAP-Rule" id="MF_01818"/>
    </source>
</evidence>
<accession>A5VJA0</accession>
<keyword id="KW-0255">Endonuclease</keyword>
<keyword id="KW-0378">Hydrolase</keyword>
<keyword id="KW-0479">Metal-binding</keyword>
<keyword id="KW-0540">Nuclease</keyword>
<keyword id="KW-1185">Reference proteome</keyword>
<keyword id="KW-0819">tRNA processing</keyword>
<keyword id="KW-0862">Zinc</keyword>
<organism>
    <name type="scientific">Limosilactobacillus reuteri (strain DSM 20016)</name>
    <name type="common">Lactobacillus reuteri</name>
    <dbReference type="NCBI Taxonomy" id="557436"/>
    <lineage>
        <taxon>Bacteria</taxon>
        <taxon>Bacillati</taxon>
        <taxon>Bacillota</taxon>
        <taxon>Bacilli</taxon>
        <taxon>Lactobacillales</taxon>
        <taxon>Lactobacillaceae</taxon>
        <taxon>Limosilactobacillus</taxon>
    </lineage>
</organism>
<sequence>MQLEFLGTGAGSPSKQRNVASVALRLLEERNAIWLFDVGEATQHQILNTTIRPRKIEKIFITHLHGDHIFGLPGLLSSRSFQGGTEPLTIYGPVGIKRYVQTSLQVSESRLSYPLHFVEITDDGELFNDHGFRVIARKLDHKIACFGYRIEEADHPGELQVEKLREQKVPSGPIYGQLKAGKTVTLPDGRVLDGHDFIGTPQPGRIIAILGDTRQTKNAILLAQNADVLVHESTFAKDETKMAHNYYHSTSKQAAEIAKKAGVKKLLLNHISARYTGKAAYQLAYQVRNIIPDTRVVNDFDVIDIPFKK</sequence>
<reference key="1">
    <citation type="journal article" date="2011" name="PLoS Genet.">
        <title>The evolution of host specialization in the vertebrate gut symbiont Lactobacillus reuteri.</title>
        <authorList>
            <person name="Frese S.A."/>
            <person name="Benson A.K."/>
            <person name="Tannock G.W."/>
            <person name="Loach D.M."/>
            <person name="Kim J."/>
            <person name="Zhang M."/>
            <person name="Oh P.L."/>
            <person name="Heng N.C."/>
            <person name="Patil P.B."/>
            <person name="Juge N."/>
            <person name="Mackenzie D.A."/>
            <person name="Pearson B.M."/>
            <person name="Lapidus A."/>
            <person name="Dalin E."/>
            <person name="Tice H."/>
            <person name="Goltsman E."/>
            <person name="Land M."/>
            <person name="Hauser L."/>
            <person name="Ivanova N."/>
            <person name="Kyrpides N.C."/>
            <person name="Walter J."/>
        </authorList>
    </citation>
    <scope>NUCLEOTIDE SEQUENCE [LARGE SCALE GENOMIC DNA]</scope>
    <source>
        <strain>DSM 20016</strain>
    </source>
</reference>
<proteinExistence type="inferred from homology"/>
<protein>
    <recommendedName>
        <fullName evidence="1">Ribonuclease Z</fullName>
        <shortName evidence="1">RNase Z</shortName>
        <ecNumber evidence="1">3.1.26.11</ecNumber>
    </recommendedName>
    <alternativeName>
        <fullName evidence="1">tRNA 3 endonuclease</fullName>
    </alternativeName>
    <alternativeName>
        <fullName evidence="1">tRNase Z</fullName>
    </alternativeName>
</protein>
<feature type="chain" id="PRO_1000070291" description="Ribonuclease Z">
    <location>
        <begin position="1"/>
        <end position="309"/>
    </location>
</feature>
<feature type="active site" description="Proton acceptor" evidence="1">
    <location>
        <position position="67"/>
    </location>
</feature>
<feature type="binding site" evidence="1">
    <location>
        <position position="63"/>
    </location>
    <ligand>
        <name>Zn(2+)</name>
        <dbReference type="ChEBI" id="CHEBI:29105"/>
        <label>1</label>
        <note>catalytic</note>
    </ligand>
</feature>
<feature type="binding site" evidence="1">
    <location>
        <position position="65"/>
    </location>
    <ligand>
        <name>Zn(2+)</name>
        <dbReference type="ChEBI" id="CHEBI:29105"/>
        <label>1</label>
        <note>catalytic</note>
    </ligand>
</feature>
<feature type="binding site" evidence="1">
    <location>
        <position position="67"/>
    </location>
    <ligand>
        <name>Zn(2+)</name>
        <dbReference type="ChEBI" id="CHEBI:29105"/>
        <label>2</label>
        <note>catalytic</note>
    </ligand>
</feature>
<feature type="binding site" evidence="1">
    <location>
        <position position="68"/>
    </location>
    <ligand>
        <name>Zn(2+)</name>
        <dbReference type="ChEBI" id="CHEBI:29105"/>
        <label>2</label>
        <note>catalytic</note>
    </ligand>
</feature>
<feature type="binding site" evidence="1">
    <location>
        <position position="141"/>
    </location>
    <ligand>
        <name>Zn(2+)</name>
        <dbReference type="ChEBI" id="CHEBI:29105"/>
        <label>1</label>
        <note>catalytic</note>
    </ligand>
</feature>
<feature type="binding site" evidence="1">
    <location>
        <position position="212"/>
    </location>
    <ligand>
        <name>Zn(2+)</name>
        <dbReference type="ChEBI" id="CHEBI:29105"/>
        <label>1</label>
        <note>catalytic</note>
    </ligand>
</feature>
<feature type="binding site" evidence="1">
    <location>
        <position position="212"/>
    </location>
    <ligand>
        <name>Zn(2+)</name>
        <dbReference type="ChEBI" id="CHEBI:29105"/>
        <label>2</label>
        <note>catalytic</note>
    </ligand>
</feature>
<feature type="binding site" evidence="1">
    <location>
        <position position="270"/>
    </location>
    <ligand>
        <name>Zn(2+)</name>
        <dbReference type="ChEBI" id="CHEBI:29105"/>
        <label>2</label>
        <note>catalytic</note>
    </ligand>
</feature>
<dbReference type="EC" id="3.1.26.11" evidence="1"/>
<dbReference type="EMBL" id="CP000705">
    <property type="protein sequence ID" value="ABQ82924.1"/>
    <property type="molecule type" value="Genomic_DNA"/>
</dbReference>
<dbReference type="RefSeq" id="WP_003668232.1">
    <property type="nucleotide sequence ID" value="NC_009513.1"/>
</dbReference>
<dbReference type="SMR" id="A5VJA0"/>
<dbReference type="STRING" id="557436.Lreu_0659"/>
<dbReference type="KEGG" id="lre:Lreu_0659"/>
<dbReference type="PATRIC" id="fig|557436.17.peg.731"/>
<dbReference type="eggNOG" id="COG1234">
    <property type="taxonomic scope" value="Bacteria"/>
</dbReference>
<dbReference type="HOGENOM" id="CLU_031317_2_0_9"/>
<dbReference type="Proteomes" id="UP000001991">
    <property type="component" value="Chromosome"/>
</dbReference>
<dbReference type="GO" id="GO:0042781">
    <property type="term" value="F:3'-tRNA processing endoribonuclease activity"/>
    <property type="evidence" value="ECO:0007669"/>
    <property type="project" value="UniProtKB-UniRule"/>
</dbReference>
<dbReference type="GO" id="GO:0008270">
    <property type="term" value="F:zinc ion binding"/>
    <property type="evidence" value="ECO:0007669"/>
    <property type="project" value="UniProtKB-UniRule"/>
</dbReference>
<dbReference type="CDD" id="cd07717">
    <property type="entry name" value="RNaseZ_ZiPD-like_MBL-fold"/>
    <property type="match status" value="1"/>
</dbReference>
<dbReference type="FunFam" id="3.60.15.10:FF:000002">
    <property type="entry name" value="Ribonuclease Z"/>
    <property type="match status" value="1"/>
</dbReference>
<dbReference type="Gene3D" id="3.60.15.10">
    <property type="entry name" value="Ribonuclease Z/Hydroxyacylglutathione hydrolase-like"/>
    <property type="match status" value="1"/>
</dbReference>
<dbReference type="HAMAP" id="MF_01818">
    <property type="entry name" value="RNase_Z_BN"/>
    <property type="match status" value="1"/>
</dbReference>
<dbReference type="InterPro" id="IPR001279">
    <property type="entry name" value="Metallo-B-lactamas"/>
</dbReference>
<dbReference type="InterPro" id="IPR036866">
    <property type="entry name" value="RibonucZ/Hydroxyglut_hydro"/>
</dbReference>
<dbReference type="InterPro" id="IPR013471">
    <property type="entry name" value="RNase_Z/BN"/>
</dbReference>
<dbReference type="NCBIfam" id="NF000801">
    <property type="entry name" value="PRK00055.1-3"/>
    <property type="match status" value="1"/>
</dbReference>
<dbReference type="NCBIfam" id="TIGR02651">
    <property type="entry name" value="RNase_Z"/>
    <property type="match status" value="1"/>
</dbReference>
<dbReference type="PANTHER" id="PTHR46018">
    <property type="entry name" value="ZINC PHOSPHODIESTERASE ELAC PROTEIN 1"/>
    <property type="match status" value="1"/>
</dbReference>
<dbReference type="PANTHER" id="PTHR46018:SF2">
    <property type="entry name" value="ZINC PHOSPHODIESTERASE ELAC PROTEIN 1"/>
    <property type="match status" value="1"/>
</dbReference>
<dbReference type="Pfam" id="PF12706">
    <property type="entry name" value="Lactamase_B_2"/>
    <property type="match status" value="2"/>
</dbReference>
<dbReference type="SMART" id="SM00849">
    <property type="entry name" value="Lactamase_B"/>
    <property type="match status" value="1"/>
</dbReference>
<dbReference type="SUPFAM" id="SSF56281">
    <property type="entry name" value="Metallo-hydrolase/oxidoreductase"/>
    <property type="match status" value="1"/>
</dbReference>
<gene>
    <name evidence="1" type="primary">rnz</name>
    <name type="ordered locus">Lreu_0659</name>
</gene>